<protein>
    <recommendedName>
        <fullName>Uncharacterized protein MT2673</fullName>
    </recommendedName>
</protein>
<organism>
    <name type="scientific">Mycobacterium tuberculosis (strain CDC 1551 / Oshkosh)</name>
    <dbReference type="NCBI Taxonomy" id="83331"/>
    <lineage>
        <taxon>Bacteria</taxon>
        <taxon>Bacillati</taxon>
        <taxon>Actinomycetota</taxon>
        <taxon>Actinomycetes</taxon>
        <taxon>Mycobacteriales</taxon>
        <taxon>Mycobacteriaceae</taxon>
        <taxon>Mycobacterium</taxon>
        <taxon>Mycobacterium tuberculosis complex</taxon>
    </lineage>
</organism>
<accession>P9WL72</accession>
<accession>L0TCV4</accession>
<accession>P65029</accession>
<accession>Q50624</accession>
<feature type="chain" id="PRO_0000427529" description="Uncharacterized protein MT2673">
    <location>
        <begin position="1"/>
        <end position="206"/>
    </location>
</feature>
<feature type="transmembrane region" description="Helical" evidence="1">
    <location>
        <begin position="4"/>
        <end position="24"/>
    </location>
</feature>
<gene>
    <name type="ordered locus">MT2673</name>
</gene>
<comment type="subcellular location">
    <subcellularLocation>
        <location evidence="2">Membrane</location>
        <topology evidence="2">Single-pass membrane protein</topology>
    </subcellularLocation>
</comment>
<sequence>MGNLLVVIAVALFIAAIVVLVVAIRRPKTPATPGGRRDPLAFDAMPQFGPRQLGPGAIVSHGGIDYVVRGSVTFREGPFVWWEHLLEGGDTPTWLSVQEDDGRLELAMWVKRTDLGLQPGGQHVIDGVTFQETERGHAGYTTEGTTGLPAGGEMDYVDCASAGQGADESMLLSFERWAPDMGWEIATGKSVLAGELTVYPAPPVSA</sequence>
<dbReference type="EMBL" id="AE000516">
    <property type="protein sequence ID" value="AAK46987.1"/>
    <property type="molecule type" value="Genomic_DNA"/>
</dbReference>
<dbReference type="PIR" id="D70727">
    <property type="entry name" value="D70727"/>
</dbReference>
<dbReference type="RefSeq" id="WP_003413441.1">
    <property type="nucleotide sequence ID" value="NZ_KK341227.1"/>
</dbReference>
<dbReference type="KEGG" id="mtc:MT2673"/>
<dbReference type="PATRIC" id="fig|83331.31.peg.2881"/>
<dbReference type="HOGENOM" id="CLU_096023_1_0_11"/>
<dbReference type="Proteomes" id="UP000001020">
    <property type="component" value="Chromosome"/>
</dbReference>
<dbReference type="GO" id="GO:0016020">
    <property type="term" value="C:membrane"/>
    <property type="evidence" value="ECO:0007669"/>
    <property type="project" value="UniProtKB-SubCell"/>
</dbReference>
<dbReference type="InterPro" id="IPR025235">
    <property type="entry name" value="DUF4178"/>
</dbReference>
<dbReference type="Pfam" id="PF13785">
    <property type="entry name" value="DUF4178"/>
    <property type="match status" value="1"/>
</dbReference>
<reference key="1">
    <citation type="journal article" date="2002" name="J. Bacteriol.">
        <title>Whole-genome comparison of Mycobacterium tuberculosis clinical and laboratory strains.</title>
        <authorList>
            <person name="Fleischmann R.D."/>
            <person name="Alland D."/>
            <person name="Eisen J.A."/>
            <person name="Carpenter L."/>
            <person name="White O."/>
            <person name="Peterson J.D."/>
            <person name="DeBoy R.T."/>
            <person name="Dodson R.J."/>
            <person name="Gwinn M.L."/>
            <person name="Haft D.H."/>
            <person name="Hickey E.K."/>
            <person name="Kolonay J.F."/>
            <person name="Nelson W.C."/>
            <person name="Umayam L.A."/>
            <person name="Ermolaeva M.D."/>
            <person name="Salzberg S.L."/>
            <person name="Delcher A."/>
            <person name="Utterback T.R."/>
            <person name="Weidman J.F."/>
            <person name="Khouri H.M."/>
            <person name="Gill J."/>
            <person name="Mikula A."/>
            <person name="Bishai W."/>
            <person name="Jacobs W.R. Jr."/>
            <person name="Venter J.C."/>
            <person name="Fraser C.M."/>
        </authorList>
    </citation>
    <scope>NUCLEOTIDE SEQUENCE [LARGE SCALE GENOMIC DNA]</scope>
    <source>
        <strain>CDC 1551 / Oshkosh</strain>
    </source>
</reference>
<name>Y2597_MYCTO</name>
<keyword id="KW-0472">Membrane</keyword>
<keyword id="KW-1185">Reference proteome</keyword>
<keyword id="KW-0812">Transmembrane</keyword>
<keyword id="KW-1133">Transmembrane helix</keyword>
<evidence type="ECO:0000255" key="1"/>
<evidence type="ECO:0000305" key="2"/>
<proteinExistence type="predicted"/>